<reference evidence="9" key="1">
    <citation type="journal article" date="2003" name="Endocrinology">
        <title>Mouse endocrine gland-derived vascular endothelial growth factor: a distinct expression pattern from its human ortholog suggests different roles as a regulator of organ-specific angiogenesis.</title>
        <authorList>
            <person name="LeCouter J."/>
            <person name="Lin R."/>
            <person name="Frantz G."/>
            <person name="Zhang Z."/>
            <person name="Hillan K."/>
            <person name="Ferrara N."/>
        </authorList>
    </citation>
    <scope>NUCLEOTIDE SEQUENCE [MRNA] (ISOFORM 1)</scope>
    <scope>FUNCTION</scope>
    <scope>TISSUE SPECIFICITY</scope>
    <source>
        <tissue evidence="4">Kidney</tissue>
    </source>
</reference>
<reference evidence="9 14" key="2">
    <citation type="submission" date="2005-07" db="EMBL/GenBank/DDBJ databases">
        <authorList>
            <person name="Mural R.J."/>
            <person name="Adams M.D."/>
            <person name="Myers E.W."/>
            <person name="Smith H.O."/>
            <person name="Venter J.C."/>
        </authorList>
    </citation>
    <scope>NUCLEOTIDE SEQUENCE [LARGE SCALE GENOMIC DNA]</scope>
</reference>
<reference evidence="9 11" key="3">
    <citation type="journal article" date="2004" name="Genome Res.">
        <title>The status, quality, and expansion of the NIH full-length cDNA project: the Mammalian Gene Collection (MGC).</title>
        <authorList>
            <consortium name="The MGC Project Team"/>
        </authorList>
    </citation>
    <scope>NUCLEOTIDE SEQUENCE [LARGE SCALE MRNA] (ISOFORMS 1 AND 2)</scope>
    <source>
        <strain evidence="10">FVB/N</strain>
        <tissue evidence="10">Kidney</tissue>
    </source>
</reference>
<reference evidence="9 14" key="4">
    <citation type="submission" date="2002-02" db="EMBL/GenBank/DDBJ databases">
        <authorList>
            <person name="Cheng M.Y."/>
            <person name="Bullock C.M."/>
            <person name="Li C."/>
            <person name="Lee A.G."/>
            <person name="Bermak J.C."/>
            <person name="Belluzzi J."/>
            <person name="Weaver D.R."/>
            <person name="Leslie F.M."/>
            <person name="Zhou Q.Y."/>
        </authorList>
    </citation>
    <scope>NUCLEOTIDE SEQUENCE [MRNA] OF 25-105 (ISOFORMS 1/2)</scope>
    <source>
        <strain evidence="13">C57BL/6J</strain>
    </source>
</reference>
<reference evidence="9" key="5">
    <citation type="journal article" date="2007" name="Biochim. Biophys. Acta">
        <title>Prokineticin-1 modulates proliferation and differentiation of enteric neural crest cells.</title>
        <authorList>
            <person name="Ngan E.S.W."/>
            <person name="Lee K.Y."/>
            <person name="Sit F.Y.L."/>
            <person name="Poon H.C."/>
            <person name="Chan J.K.Y."/>
            <person name="Sham M.H."/>
            <person name="Lui V.C.H."/>
            <person name="Tam P.K.H."/>
        </authorList>
    </citation>
    <scope>FUNCTION</scope>
    <scope>TISSUE SPECIFICITY</scope>
</reference>
<reference evidence="9" key="6">
    <citation type="journal article" date="2007" name="Placenta">
        <title>Placental expression of EG-VEGF and its receptors PKR1 (prokineticin receptor-1) and PKR2 throughout mouse gestation.</title>
        <authorList>
            <person name="Hoffmann P."/>
            <person name="Feige J.-J."/>
            <person name="Alfaidy N."/>
        </authorList>
    </citation>
    <scope>FUNCTION</scope>
    <scope>TISSUE SPECIFICITY</scope>
    <scope>DEVELOPMENTAL STAGE</scope>
</reference>
<protein>
    <recommendedName>
        <fullName evidence="12">Prokineticin-1</fullName>
    </recommendedName>
    <alternativeName>
        <fullName evidence="2">Endocrine-gland-derived vascular endothelial growth factor</fullName>
        <shortName evidence="2">EG-VEGF</shortName>
    </alternativeName>
</protein>
<sequence>MRGAVHIFIMLLLATASDCAVITGACERDIQCGAGTCCAISLWLRGLRLCTPLGREGEECHPGSHKIPFLRKRQHHTCPCSPSLLCSRFPDGRYRCFRDLKNANF</sequence>
<dbReference type="EMBL" id="CH466607">
    <property type="protein sequence ID" value="EDL01898.1"/>
    <property type="molecule type" value="Genomic_DNA"/>
</dbReference>
<dbReference type="EMBL" id="BC042707">
    <property type="protein sequence ID" value="AAH42707.1"/>
    <property type="molecule type" value="mRNA"/>
</dbReference>
<dbReference type="EMBL" id="BC117006">
    <property type="protein sequence ID" value="AAI17007.1"/>
    <property type="molecule type" value="mRNA"/>
</dbReference>
<dbReference type="EMBL" id="BC117008">
    <property type="protein sequence ID" value="AAI17009.1"/>
    <property type="molecule type" value="mRNA"/>
</dbReference>
<dbReference type="EMBL" id="AF487281">
    <property type="protein sequence ID" value="AAM49573.1"/>
    <property type="molecule type" value="mRNA"/>
</dbReference>
<dbReference type="CCDS" id="CCDS38589.1">
    <molecule id="Q14A28-1"/>
</dbReference>
<dbReference type="CCDS" id="CCDS89674.1">
    <molecule id="Q14A28-2"/>
</dbReference>
<dbReference type="RefSeq" id="NP_001037847.1">
    <molecule id="Q14A28-1"/>
    <property type="nucleotide sequence ID" value="NM_001044382.2"/>
</dbReference>
<dbReference type="RefSeq" id="NP_001344814.1">
    <molecule id="Q14A28-2"/>
    <property type="nucleotide sequence ID" value="NM_001357885.1"/>
</dbReference>
<dbReference type="RefSeq" id="XP_017175073.1">
    <property type="nucleotide sequence ID" value="XM_017319584.1"/>
</dbReference>
<dbReference type="SMR" id="Q14A28"/>
<dbReference type="FunCoup" id="Q14A28">
    <property type="interactions" value="400"/>
</dbReference>
<dbReference type="STRING" id="10090.ENSMUSP00000060617"/>
<dbReference type="PhosphoSitePlus" id="Q14A28"/>
<dbReference type="PaxDb" id="10090-ENSMUSP00000060617"/>
<dbReference type="Antibodypedia" id="20098">
    <property type="antibodies" value="310 antibodies from 31 providers"/>
</dbReference>
<dbReference type="Ensembl" id="ENSMUST00000049852.10">
    <molecule id="Q14A28-1"/>
    <property type="protein sequence ID" value="ENSMUSP00000060617.9"/>
    <property type="gene ID" value="ENSMUSG00000070368.10"/>
</dbReference>
<dbReference type="Ensembl" id="ENSMUST00000197758.5">
    <molecule id="Q14A28-2"/>
    <property type="protein sequence ID" value="ENSMUSP00000143197.2"/>
    <property type="gene ID" value="ENSMUSG00000070368.10"/>
</dbReference>
<dbReference type="GeneID" id="246691"/>
<dbReference type="KEGG" id="mmu:246691"/>
<dbReference type="UCSC" id="uc008qwv.1">
    <molecule id="Q14A28-1"/>
    <property type="organism name" value="mouse"/>
</dbReference>
<dbReference type="AGR" id="MGI:2180370"/>
<dbReference type="CTD" id="84432"/>
<dbReference type="MGI" id="MGI:2180370">
    <property type="gene designation" value="Prok1"/>
</dbReference>
<dbReference type="VEuPathDB" id="HostDB:ENSMUSG00000070368"/>
<dbReference type="eggNOG" id="ENOG502S1PW">
    <property type="taxonomic scope" value="Eukaryota"/>
</dbReference>
<dbReference type="GeneTree" id="ENSGT00940000161331"/>
<dbReference type="InParanoid" id="Q14A28"/>
<dbReference type="OMA" id="LYKCAVI"/>
<dbReference type="OrthoDB" id="6433669at2759"/>
<dbReference type="PhylomeDB" id="Q14A28"/>
<dbReference type="TreeFam" id="TF332732"/>
<dbReference type="Reactome" id="R-MMU-375276">
    <property type="pathway name" value="Peptide ligand-binding receptors"/>
</dbReference>
<dbReference type="Reactome" id="R-MMU-416476">
    <property type="pathway name" value="G alpha (q) signalling events"/>
</dbReference>
<dbReference type="BioGRID-ORCS" id="246691">
    <property type="hits" value="2 hits in 77 CRISPR screens"/>
</dbReference>
<dbReference type="PRO" id="PR:Q14A28"/>
<dbReference type="Proteomes" id="UP000000589">
    <property type="component" value="Chromosome 3"/>
</dbReference>
<dbReference type="RNAct" id="Q14A28">
    <property type="molecule type" value="protein"/>
</dbReference>
<dbReference type="Bgee" id="ENSMUSG00000070368">
    <property type="expression patterns" value="Expressed in right kidney and 11 other cell types or tissues"/>
</dbReference>
<dbReference type="GO" id="GO:0005576">
    <property type="term" value="C:extracellular region"/>
    <property type="evidence" value="ECO:0000314"/>
    <property type="project" value="MGI"/>
</dbReference>
<dbReference type="GO" id="GO:0001664">
    <property type="term" value="F:G protein-coupled receptor binding"/>
    <property type="evidence" value="ECO:0000304"/>
    <property type="project" value="DFLAT"/>
</dbReference>
<dbReference type="GO" id="GO:0008083">
    <property type="term" value="F:growth factor activity"/>
    <property type="evidence" value="ECO:0007669"/>
    <property type="project" value="UniProtKB-KW"/>
</dbReference>
<dbReference type="GO" id="GO:0001525">
    <property type="term" value="P:angiogenesis"/>
    <property type="evidence" value="ECO:0007669"/>
    <property type="project" value="UniProtKB-KW"/>
</dbReference>
<dbReference type="GO" id="GO:0008283">
    <property type="term" value="P:cell population proliferation"/>
    <property type="evidence" value="ECO:0000314"/>
    <property type="project" value="MGI"/>
</dbReference>
<dbReference type="GO" id="GO:0007623">
    <property type="term" value="P:circadian rhythm"/>
    <property type="evidence" value="ECO:0000304"/>
    <property type="project" value="MGI"/>
</dbReference>
<dbReference type="GO" id="GO:0051781">
    <property type="term" value="P:positive regulation of cell division"/>
    <property type="evidence" value="ECO:0007669"/>
    <property type="project" value="UniProtKB-KW"/>
</dbReference>
<dbReference type="GO" id="GO:0043410">
    <property type="term" value="P:positive regulation of MAPK cascade"/>
    <property type="evidence" value="ECO:0000314"/>
    <property type="project" value="MGI"/>
</dbReference>
<dbReference type="GO" id="GO:1905564">
    <property type="term" value="P:positive regulation of vascular endothelial cell proliferation"/>
    <property type="evidence" value="ECO:0000314"/>
    <property type="project" value="MGI"/>
</dbReference>
<dbReference type="GO" id="GO:0045765">
    <property type="term" value="P:regulation of angiogenesis"/>
    <property type="evidence" value="ECO:0000314"/>
    <property type="project" value="MGI"/>
</dbReference>
<dbReference type="GO" id="GO:0101023">
    <property type="term" value="P:vascular endothelial cell proliferation"/>
    <property type="evidence" value="ECO:0000314"/>
    <property type="project" value="MGI"/>
</dbReference>
<dbReference type="FunFam" id="2.10.80.10:FF:000004">
    <property type="entry name" value="Prokineticin 1"/>
    <property type="match status" value="1"/>
</dbReference>
<dbReference type="Gene3D" id="2.10.80.10">
    <property type="entry name" value="Lipase, subunit A"/>
    <property type="match status" value="1"/>
</dbReference>
<dbReference type="InterPro" id="IPR009523">
    <property type="entry name" value="Prokineticin"/>
</dbReference>
<dbReference type="InterPro" id="IPR023569">
    <property type="entry name" value="Prokineticin_domain"/>
</dbReference>
<dbReference type="PANTHER" id="PTHR18821">
    <property type="entry name" value="PROKINETICIN"/>
    <property type="match status" value="1"/>
</dbReference>
<dbReference type="PANTHER" id="PTHR18821:SF7">
    <property type="entry name" value="PROKINETICIN-1"/>
    <property type="match status" value="1"/>
</dbReference>
<dbReference type="Pfam" id="PF06607">
    <property type="entry name" value="Prokineticin"/>
    <property type="match status" value="1"/>
</dbReference>
<dbReference type="SUPFAM" id="SSF57190">
    <property type="entry name" value="Colipase-like"/>
    <property type="match status" value="2"/>
</dbReference>
<accession>Q14A28</accession>
<accession>Q0P609</accession>
<accession>Q8K457</accession>
<comment type="function">
    <text evidence="2 4 6 7">Potently contracts gastrointestinal (GI) smooth muscle. Induces proliferation, migration and fenestration (the formation of membrane discontinuities) in capillary endothelial cells. Induces proliferation and differentiation, but not migration, of enteric neural crest cells. Directly influences neuroblastoma progression by promoting the proliferation and migration of neuroblastoma cells. Positively regulates PTGS2 expression and prostaglandin synthesis. May play a role in placentation. May play a role in normal and pathological testis angiogenesis.</text>
</comment>
<comment type="subcellular location">
    <subcellularLocation>
        <location evidence="2">Secreted</location>
    </subcellularLocation>
</comment>
<comment type="alternative products">
    <event type="alternative splicing"/>
    <isoform>
        <id>Q14A28-1</id>
        <name evidence="4 5">1</name>
        <sequence type="displayed"/>
    </isoform>
    <isoform>
        <id>Q14A28-2</id>
        <name evidence="5">2</name>
        <sequence type="described" ref="VSP_053117"/>
    </isoform>
</comment>
<comment type="tissue specificity">
    <text evidence="4 6 7">Highly expressed in liver and ovary and weakly expressed in testis and placenta. Expressed in mucosa and mesenchyme of embryonic gut during enteric nervous system development (at protein level). Predominantly expressed in kidney and liver. Also expressed in lung, ovary, placenta and testis. In fetal liver, is restricted to and highly expressed in hepatocytes. In adult kidney, expression is restricted to the endothelial tubule cells. In placenta, expressed throughout gestation.</text>
</comment>
<comment type="developmental stage">
    <text evidence="7">In placenta, at 7.5 dpc highly expressed in ectoplacental cone, endoderm and in giant cells, and at 9.5 dpc restricted mainly to the labyrinth layer (at protein level). In placenta, most highly expressed during early gestation (between 9.5 and 10.5 dpc).</text>
</comment>
<comment type="similarity">
    <text evidence="3">Belongs to the AVIT (prokineticin) family.</text>
</comment>
<keyword id="KW-0025">Alternative splicing</keyword>
<keyword id="KW-0037">Angiogenesis</keyword>
<keyword id="KW-1015">Disulfide bond</keyword>
<keyword id="KW-0339">Growth factor</keyword>
<keyword id="KW-0497">Mitogen</keyword>
<keyword id="KW-1185">Reference proteome</keyword>
<keyword id="KW-0964">Secreted</keyword>
<keyword id="KW-0732">Signal</keyword>
<feature type="signal peptide" evidence="3">
    <location>
        <begin position="1"/>
        <end position="19"/>
    </location>
</feature>
<feature type="chain" id="PRO_0000377457" description="Prokineticin-1" evidence="3">
    <location>
        <begin position="20"/>
        <end position="105"/>
    </location>
</feature>
<feature type="disulfide bond" evidence="1">
    <location>
        <begin position="26"/>
        <end position="38"/>
    </location>
</feature>
<feature type="disulfide bond" evidence="1">
    <location>
        <begin position="32"/>
        <end position="50"/>
    </location>
</feature>
<feature type="disulfide bond" evidence="1">
    <location>
        <begin position="37"/>
        <end position="78"/>
    </location>
</feature>
<feature type="disulfide bond" evidence="1">
    <location>
        <begin position="60"/>
        <end position="86"/>
    </location>
</feature>
<feature type="disulfide bond" evidence="1">
    <location>
        <begin position="80"/>
        <end position="96"/>
    </location>
</feature>
<feature type="splice variant" id="VSP_053117" description="In isoform 2." evidence="8">
    <original>MRGAVHIFIMLLLATASDCAVITG</original>
    <variation>MKAVVKTK</variation>
    <location>
        <begin position="1"/>
        <end position="24"/>
    </location>
</feature>
<proteinExistence type="evidence at protein level"/>
<organism>
    <name type="scientific">Mus musculus</name>
    <name type="common">Mouse</name>
    <dbReference type="NCBI Taxonomy" id="10090"/>
    <lineage>
        <taxon>Eukaryota</taxon>
        <taxon>Metazoa</taxon>
        <taxon>Chordata</taxon>
        <taxon>Craniata</taxon>
        <taxon>Vertebrata</taxon>
        <taxon>Euteleostomi</taxon>
        <taxon>Mammalia</taxon>
        <taxon>Eutheria</taxon>
        <taxon>Euarchontoglires</taxon>
        <taxon>Glires</taxon>
        <taxon>Rodentia</taxon>
        <taxon>Myomorpha</taxon>
        <taxon>Muroidea</taxon>
        <taxon>Muridae</taxon>
        <taxon>Murinae</taxon>
        <taxon>Mus</taxon>
        <taxon>Mus</taxon>
    </lineage>
</organism>
<name>PROK1_MOUSE</name>
<evidence type="ECO:0000250" key="1">
    <source>
        <dbReference type="UniProtKB" id="P25687"/>
    </source>
</evidence>
<evidence type="ECO:0000250" key="2">
    <source>
        <dbReference type="UniProtKB" id="P58294"/>
    </source>
</evidence>
<evidence type="ECO:0000255" key="3"/>
<evidence type="ECO:0000269" key="4">
    <source>
    </source>
</evidence>
<evidence type="ECO:0000269" key="5">
    <source>
    </source>
</evidence>
<evidence type="ECO:0000269" key="6">
    <source>
    </source>
</evidence>
<evidence type="ECO:0000269" key="7">
    <source>
    </source>
</evidence>
<evidence type="ECO:0000303" key="8">
    <source>
    </source>
</evidence>
<evidence type="ECO:0000305" key="9"/>
<evidence type="ECO:0000312" key="10">
    <source>
        <dbReference type="EMBL" id="AAH42707.1"/>
    </source>
</evidence>
<evidence type="ECO:0000312" key="11">
    <source>
        <dbReference type="EMBL" id="AAI17007.1"/>
    </source>
</evidence>
<evidence type="ECO:0000312" key="12">
    <source>
        <dbReference type="EMBL" id="AAI17009.1"/>
    </source>
</evidence>
<evidence type="ECO:0000312" key="13">
    <source>
        <dbReference type="EMBL" id="AAM49573.1"/>
    </source>
</evidence>
<evidence type="ECO:0000312" key="14">
    <source>
        <dbReference type="EMBL" id="EDL01898.1"/>
    </source>
</evidence>
<evidence type="ECO:0000312" key="15">
    <source>
        <dbReference type="MGI" id="MGI:2180370"/>
    </source>
</evidence>
<gene>
    <name evidence="15" type="primary">Prok1</name>
    <name evidence="13" type="synonym">Pk1</name>
</gene>